<keyword id="KW-0479">Metal-binding</keyword>
<keyword id="KW-1185">Reference proteome</keyword>
<keyword id="KW-0862">Zinc</keyword>
<keyword id="KW-0863">Zinc-finger</keyword>
<dbReference type="EMBL" id="AK014794">
    <property type="protein sequence ID" value="BAB29556.1"/>
    <property type="molecule type" value="mRNA"/>
</dbReference>
<dbReference type="EMBL" id="BC119773">
    <property type="protein sequence ID" value="AAI19774.1"/>
    <property type="molecule type" value="mRNA"/>
</dbReference>
<dbReference type="EMBL" id="BC119816">
    <property type="protein sequence ID" value="AAI19817.1"/>
    <property type="molecule type" value="mRNA"/>
</dbReference>
<dbReference type="CCDS" id="CCDS49414.1"/>
<dbReference type="RefSeq" id="NP_083380.1">
    <property type="nucleotide sequence ID" value="NM_029104.1"/>
</dbReference>
<dbReference type="FunCoup" id="Q9D5Z5">
    <property type="interactions" value="11"/>
</dbReference>
<dbReference type="STRING" id="10090.ENSMUSP00000022353"/>
<dbReference type="PaxDb" id="10090-ENSMUSP00000022353"/>
<dbReference type="ProteomicsDB" id="287507"/>
<dbReference type="Antibodypedia" id="29415">
    <property type="antibodies" value="92 antibodies from 17 providers"/>
</dbReference>
<dbReference type="Ensembl" id="ENSMUST00000022353.5">
    <property type="protein sequence ID" value="ENSMUSP00000022353.4"/>
    <property type="gene ID" value="ENSMUSG00000021815.5"/>
</dbReference>
<dbReference type="GeneID" id="74843"/>
<dbReference type="KEGG" id="mmu:74843"/>
<dbReference type="UCSC" id="uc007sjw.2">
    <property type="organism name" value="mouse"/>
</dbReference>
<dbReference type="AGR" id="MGI:1922093"/>
<dbReference type="CTD" id="118490"/>
<dbReference type="MGI" id="MGI:1922093">
    <property type="gene designation" value="Mss51"/>
</dbReference>
<dbReference type="VEuPathDB" id="HostDB:ENSMUSG00000021815"/>
<dbReference type="eggNOG" id="ENOG502QVEJ">
    <property type="taxonomic scope" value="Eukaryota"/>
</dbReference>
<dbReference type="GeneTree" id="ENSGT00940000153820"/>
<dbReference type="HOGENOM" id="CLU_047718_0_0_1"/>
<dbReference type="InParanoid" id="Q9D5Z5"/>
<dbReference type="OMA" id="DELGHMF"/>
<dbReference type="OrthoDB" id="5282002at2759"/>
<dbReference type="PhylomeDB" id="Q9D5Z5"/>
<dbReference type="TreeFam" id="TF330829"/>
<dbReference type="BioGRID-ORCS" id="74843">
    <property type="hits" value="1 hit in 77 CRISPR screens"/>
</dbReference>
<dbReference type="ChiTaRS" id="Mss51">
    <property type="organism name" value="mouse"/>
</dbReference>
<dbReference type="PRO" id="PR:Q9D5Z5"/>
<dbReference type="Proteomes" id="UP000000589">
    <property type="component" value="Chromosome 14"/>
</dbReference>
<dbReference type="RNAct" id="Q9D5Z5">
    <property type="molecule type" value="protein"/>
</dbReference>
<dbReference type="Bgee" id="ENSMUSG00000021815">
    <property type="expression patterns" value="Expressed in knee joint and 116 other cell types or tissues"/>
</dbReference>
<dbReference type="GO" id="GO:0008270">
    <property type="term" value="F:zinc ion binding"/>
    <property type="evidence" value="ECO:0007669"/>
    <property type="project" value="UniProtKB-KW"/>
</dbReference>
<dbReference type="Gene3D" id="6.10.140.2220">
    <property type="match status" value="1"/>
</dbReference>
<dbReference type="InterPro" id="IPR052839">
    <property type="entry name" value="Mito_gene_expr_regulator"/>
</dbReference>
<dbReference type="InterPro" id="IPR046824">
    <property type="entry name" value="Mss51-like_C"/>
</dbReference>
<dbReference type="InterPro" id="IPR002893">
    <property type="entry name" value="Znf_MYND"/>
</dbReference>
<dbReference type="PANTHER" id="PTHR46920">
    <property type="match status" value="1"/>
</dbReference>
<dbReference type="PANTHER" id="PTHR46920:SF1">
    <property type="entry name" value="PROTEIN MSS51 HOMOLOG, MITOCHONDRIAL-RELATED"/>
    <property type="match status" value="1"/>
</dbReference>
<dbReference type="Pfam" id="PF20179">
    <property type="entry name" value="MSS51_C"/>
    <property type="match status" value="1"/>
</dbReference>
<dbReference type="Pfam" id="PF01753">
    <property type="entry name" value="zf-MYND"/>
    <property type="match status" value="1"/>
</dbReference>
<dbReference type="SUPFAM" id="SSF144232">
    <property type="entry name" value="HIT/MYND zinc finger-like"/>
    <property type="match status" value="1"/>
</dbReference>
<dbReference type="PROSITE" id="PS01360">
    <property type="entry name" value="ZF_MYND_1"/>
    <property type="match status" value="1"/>
</dbReference>
<dbReference type="PROSITE" id="PS50865">
    <property type="entry name" value="ZF_MYND_2"/>
    <property type="match status" value="1"/>
</dbReference>
<organism>
    <name type="scientific">Mus musculus</name>
    <name type="common">Mouse</name>
    <dbReference type="NCBI Taxonomy" id="10090"/>
    <lineage>
        <taxon>Eukaryota</taxon>
        <taxon>Metazoa</taxon>
        <taxon>Chordata</taxon>
        <taxon>Craniata</taxon>
        <taxon>Vertebrata</taxon>
        <taxon>Euteleostomi</taxon>
        <taxon>Mammalia</taxon>
        <taxon>Eutheria</taxon>
        <taxon>Euarchontoglires</taxon>
        <taxon>Glires</taxon>
        <taxon>Rodentia</taxon>
        <taxon>Myomorpha</taxon>
        <taxon>Muroidea</taxon>
        <taxon>Muridae</taxon>
        <taxon>Murinae</taxon>
        <taxon>Mus</taxon>
        <taxon>Mus</taxon>
    </lineage>
</organism>
<comment type="caution">
    <text evidence="2">Although no clear MSS51 ortholog is encoded in mammalian genomes, the mammalian MSS51/ZMYND17 protein is significantly similar. Considered by a number of resources to be the ortholog of yeast MSS51.</text>
</comment>
<proteinExistence type="evidence at transcript level"/>
<sequence>MAPRSRRRKHKKPPPVIPMIEIPPTEVSPVSPALSKPGPSIDALGFISLDNNVPGLSQLILQKLNMKNYEEYKLVINGGTPVSSFGFRCQQEMFQKMEDTFRFCAYCKVLPHGLSNCKVLRHCKRCRNVYYCDTECQRSDWPAHRKVCRELRLVAVDRVMEWLLVTGDFVLPSGPWPWLPEDIQNWDTWFSMRGLQLESTLNALLGSHSMTMLWASLGRPRPDPDVLHGSLKRLMTDVLSRPLTLGLGLRTVAIDVGKTGGSTLHVVGASHVETFLIRSGDYDELGYMFPEHLGFHVIMVGVDVATDLLQSSSSLSLEPGTIQLSGHRALYHDFWEEQIETGILAHPDLVAAFHPGFHASPGLMEAWLPTLLLLRDYEIPTLITVYSQQELEASLQILVNLDTHIIACGANPFASLKPEQVYSNPNKQPVYSSAYYIMFLGSSPAN</sequence>
<protein>
    <recommendedName>
        <fullName>Putative protein MSS51 homolog, mitochondrial</fullName>
    </recommendedName>
    <alternativeName>
        <fullName>Zinc finger MYND domain-containing protein 17</fullName>
    </alternativeName>
</protein>
<name>MSS51_MOUSE</name>
<gene>
    <name type="primary">Mss51</name>
    <name type="synonym">Zmynd17</name>
</gene>
<reference key="1">
    <citation type="journal article" date="2005" name="Science">
        <title>The transcriptional landscape of the mammalian genome.</title>
        <authorList>
            <person name="Carninci P."/>
            <person name="Kasukawa T."/>
            <person name="Katayama S."/>
            <person name="Gough J."/>
            <person name="Frith M.C."/>
            <person name="Maeda N."/>
            <person name="Oyama R."/>
            <person name="Ravasi T."/>
            <person name="Lenhard B."/>
            <person name="Wells C."/>
            <person name="Kodzius R."/>
            <person name="Shimokawa K."/>
            <person name="Bajic V.B."/>
            <person name="Brenner S.E."/>
            <person name="Batalov S."/>
            <person name="Forrest A.R."/>
            <person name="Zavolan M."/>
            <person name="Davis M.J."/>
            <person name="Wilming L.G."/>
            <person name="Aidinis V."/>
            <person name="Allen J.E."/>
            <person name="Ambesi-Impiombato A."/>
            <person name="Apweiler R."/>
            <person name="Aturaliya R.N."/>
            <person name="Bailey T.L."/>
            <person name="Bansal M."/>
            <person name="Baxter L."/>
            <person name="Beisel K.W."/>
            <person name="Bersano T."/>
            <person name="Bono H."/>
            <person name="Chalk A.M."/>
            <person name="Chiu K.P."/>
            <person name="Choudhary V."/>
            <person name="Christoffels A."/>
            <person name="Clutterbuck D.R."/>
            <person name="Crowe M.L."/>
            <person name="Dalla E."/>
            <person name="Dalrymple B.P."/>
            <person name="de Bono B."/>
            <person name="Della Gatta G."/>
            <person name="di Bernardo D."/>
            <person name="Down T."/>
            <person name="Engstrom P."/>
            <person name="Fagiolini M."/>
            <person name="Faulkner G."/>
            <person name="Fletcher C.F."/>
            <person name="Fukushima T."/>
            <person name="Furuno M."/>
            <person name="Futaki S."/>
            <person name="Gariboldi M."/>
            <person name="Georgii-Hemming P."/>
            <person name="Gingeras T.R."/>
            <person name="Gojobori T."/>
            <person name="Green R.E."/>
            <person name="Gustincich S."/>
            <person name="Harbers M."/>
            <person name="Hayashi Y."/>
            <person name="Hensch T.K."/>
            <person name="Hirokawa N."/>
            <person name="Hill D."/>
            <person name="Huminiecki L."/>
            <person name="Iacono M."/>
            <person name="Ikeo K."/>
            <person name="Iwama A."/>
            <person name="Ishikawa T."/>
            <person name="Jakt M."/>
            <person name="Kanapin A."/>
            <person name="Katoh M."/>
            <person name="Kawasawa Y."/>
            <person name="Kelso J."/>
            <person name="Kitamura H."/>
            <person name="Kitano H."/>
            <person name="Kollias G."/>
            <person name="Krishnan S.P."/>
            <person name="Kruger A."/>
            <person name="Kummerfeld S.K."/>
            <person name="Kurochkin I.V."/>
            <person name="Lareau L.F."/>
            <person name="Lazarevic D."/>
            <person name="Lipovich L."/>
            <person name="Liu J."/>
            <person name="Liuni S."/>
            <person name="McWilliam S."/>
            <person name="Madan Babu M."/>
            <person name="Madera M."/>
            <person name="Marchionni L."/>
            <person name="Matsuda H."/>
            <person name="Matsuzawa S."/>
            <person name="Miki H."/>
            <person name="Mignone F."/>
            <person name="Miyake S."/>
            <person name="Morris K."/>
            <person name="Mottagui-Tabar S."/>
            <person name="Mulder N."/>
            <person name="Nakano N."/>
            <person name="Nakauchi H."/>
            <person name="Ng P."/>
            <person name="Nilsson R."/>
            <person name="Nishiguchi S."/>
            <person name="Nishikawa S."/>
            <person name="Nori F."/>
            <person name="Ohara O."/>
            <person name="Okazaki Y."/>
            <person name="Orlando V."/>
            <person name="Pang K.C."/>
            <person name="Pavan W.J."/>
            <person name="Pavesi G."/>
            <person name="Pesole G."/>
            <person name="Petrovsky N."/>
            <person name="Piazza S."/>
            <person name="Reed J."/>
            <person name="Reid J.F."/>
            <person name="Ring B.Z."/>
            <person name="Ringwald M."/>
            <person name="Rost B."/>
            <person name="Ruan Y."/>
            <person name="Salzberg S.L."/>
            <person name="Sandelin A."/>
            <person name="Schneider C."/>
            <person name="Schoenbach C."/>
            <person name="Sekiguchi K."/>
            <person name="Semple C.A."/>
            <person name="Seno S."/>
            <person name="Sessa L."/>
            <person name="Sheng Y."/>
            <person name="Shibata Y."/>
            <person name="Shimada H."/>
            <person name="Shimada K."/>
            <person name="Silva D."/>
            <person name="Sinclair B."/>
            <person name="Sperling S."/>
            <person name="Stupka E."/>
            <person name="Sugiura K."/>
            <person name="Sultana R."/>
            <person name="Takenaka Y."/>
            <person name="Taki K."/>
            <person name="Tammoja K."/>
            <person name="Tan S.L."/>
            <person name="Tang S."/>
            <person name="Taylor M.S."/>
            <person name="Tegner J."/>
            <person name="Teichmann S.A."/>
            <person name="Ueda H.R."/>
            <person name="van Nimwegen E."/>
            <person name="Verardo R."/>
            <person name="Wei C.L."/>
            <person name="Yagi K."/>
            <person name="Yamanishi H."/>
            <person name="Zabarovsky E."/>
            <person name="Zhu S."/>
            <person name="Zimmer A."/>
            <person name="Hide W."/>
            <person name="Bult C."/>
            <person name="Grimmond S.M."/>
            <person name="Teasdale R.D."/>
            <person name="Liu E.T."/>
            <person name="Brusic V."/>
            <person name="Quackenbush J."/>
            <person name="Wahlestedt C."/>
            <person name="Mattick J.S."/>
            <person name="Hume D.A."/>
            <person name="Kai C."/>
            <person name="Sasaki D."/>
            <person name="Tomaru Y."/>
            <person name="Fukuda S."/>
            <person name="Kanamori-Katayama M."/>
            <person name="Suzuki M."/>
            <person name="Aoki J."/>
            <person name="Arakawa T."/>
            <person name="Iida J."/>
            <person name="Imamura K."/>
            <person name="Itoh M."/>
            <person name="Kato T."/>
            <person name="Kawaji H."/>
            <person name="Kawagashira N."/>
            <person name="Kawashima T."/>
            <person name="Kojima M."/>
            <person name="Kondo S."/>
            <person name="Konno H."/>
            <person name="Nakano K."/>
            <person name="Ninomiya N."/>
            <person name="Nishio T."/>
            <person name="Okada M."/>
            <person name="Plessy C."/>
            <person name="Shibata K."/>
            <person name="Shiraki T."/>
            <person name="Suzuki S."/>
            <person name="Tagami M."/>
            <person name="Waki K."/>
            <person name="Watahiki A."/>
            <person name="Okamura-Oho Y."/>
            <person name="Suzuki H."/>
            <person name="Kawai J."/>
            <person name="Hayashizaki Y."/>
        </authorList>
    </citation>
    <scope>NUCLEOTIDE SEQUENCE [LARGE SCALE MRNA]</scope>
    <source>
        <strain>C57BL/6J</strain>
        <tissue>Head</tissue>
    </source>
</reference>
<reference key="2">
    <citation type="journal article" date="2004" name="Genome Res.">
        <title>The status, quality, and expansion of the NIH full-length cDNA project: the Mammalian Gene Collection (MGC).</title>
        <authorList>
            <consortium name="The MGC Project Team"/>
        </authorList>
    </citation>
    <scope>NUCLEOTIDE SEQUENCE [LARGE SCALE MRNA]</scope>
</reference>
<accession>Q9D5Z5</accession>
<accession>Q0VD61</accession>
<evidence type="ECO:0000255" key="1">
    <source>
        <dbReference type="PROSITE-ProRule" id="PRU00134"/>
    </source>
</evidence>
<evidence type="ECO:0000305" key="2"/>
<feature type="chain" id="PRO_0000218318" description="Putative protein MSS51 homolog, mitochondrial">
    <location>
        <begin position="1"/>
        <end position="446"/>
    </location>
</feature>
<feature type="zinc finger region" description="MYND-type" evidence="1">
    <location>
        <begin position="104"/>
        <end position="148"/>
    </location>
</feature>
<feature type="binding site" evidence="1">
    <location>
        <position position="104"/>
    </location>
    <ligand>
        <name>Zn(2+)</name>
        <dbReference type="ChEBI" id="CHEBI:29105"/>
        <label>1</label>
    </ligand>
</feature>
<feature type="binding site" evidence="1">
    <location>
        <position position="107"/>
    </location>
    <ligand>
        <name>Zn(2+)</name>
        <dbReference type="ChEBI" id="CHEBI:29105"/>
        <label>1</label>
    </ligand>
</feature>
<feature type="binding site" evidence="1">
    <location>
        <position position="123"/>
    </location>
    <ligand>
        <name>Zn(2+)</name>
        <dbReference type="ChEBI" id="CHEBI:29105"/>
        <label>2</label>
    </ligand>
</feature>
<feature type="binding site" evidence="1">
    <location>
        <position position="126"/>
    </location>
    <ligand>
        <name>Zn(2+)</name>
        <dbReference type="ChEBI" id="CHEBI:29105"/>
        <label>2</label>
    </ligand>
</feature>
<feature type="binding site" evidence="1">
    <location>
        <position position="132"/>
    </location>
    <ligand>
        <name>Zn(2+)</name>
        <dbReference type="ChEBI" id="CHEBI:29105"/>
        <label>1</label>
    </ligand>
</feature>
<feature type="binding site" evidence="1">
    <location>
        <position position="136"/>
    </location>
    <ligand>
        <name>Zn(2+)</name>
        <dbReference type="ChEBI" id="CHEBI:29105"/>
        <label>1</label>
    </ligand>
</feature>
<feature type="binding site" evidence="1">
    <location>
        <position position="144"/>
    </location>
    <ligand>
        <name>Zn(2+)</name>
        <dbReference type="ChEBI" id="CHEBI:29105"/>
        <label>2</label>
    </ligand>
</feature>
<feature type="binding site" evidence="1">
    <location>
        <position position="148"/>
    </location>
    <ligand>
        <name>Zn(2+)</name>
        <dbReference type="ChEBI" id="CHEBI:29105"/>
        <label>2</label>
    </ligand>
</feature>